<protein>
    <recommendedName>
        <fullName>Mitochondrial import inner membrane translocase subunit tim21</fullName>
    </recommendedName>
</protein>
<organism>
    <name type="scientific">Aspergillus fumigatus (strain ATCC MYA-4609 / CBS 101355 / FGSC A1100 / Af293)</name>
    <name type="common">Neosartorya fumigata</name>
    <dbReference type="NCBI Taxonomy" id="330879"/>
    <lineage>
        <taxon>Eukaryota</taxon>
        <taxon>Fungi</taxon>
        <taxon>Dikarya</taxon>
        <taxon>Ascomycota</taxon>
        <taxon>Pezizomycotina</taxon>
        <taxon>Eurotiomycetes</taxon>
        <taxon>Eurotiomycetidae</taxon>
        <taxon>Eurotiales</taxon>
        <taxon>Aspergillaceae</taxon>
        <taxon>Aspergillus</taxon>
        <taxon>Aspergillus subgen. Fumigati</taxon>
    </lineage>
</organism>
<feature type="transit peptide" description="Mitochondrion" evidence="2">
    <location>
        <begin position="1"/>
        <end position="35"/>
    </location>
</feature>
<feature type="chain" id="PRO_0000043141" description="Mitochondrial import inner membrane translocase subunit tim21">
    <location>
        <begin position="36"/>
        <end position="237"/>
    </location>
</feature>
<feature type="topological domain" description="Mitochondrial matrix" evidence="2">
    <location>
        <begin position="36"/>
        <end position="83"/>
    </location>
</feature>
<feature type="transmembrane region" description="Helical" evidence="2">
    <location>
        <begin position="84"/>
        <end position="104"/>
    </location>
</feature>
<feature type="topological domain" description="Mitochondrial intermembrane" evidence="2">
    <location>
        <begin position="105"/>
        <end position="237"/>
    </location>
</feature>
<sequence>MMSPHLLPSTSIPKASAALLLRPAFPRMTTLTRFYATQSDLGGGSGSKATPRRRNVTVLSDDGRYEWGELSGREKVARATQQSLNFLVIVAGAVLTGGVFYLLYTEVFSPNSRTWQFEKAVQRIKDDPRCTDLLGDRREIKAYGESTGSRWERNRPIATSMFKDRQGREHMKMHFHVEGPLNSGIVIVHMMKPLDKDEWEYLLLALDVKGHSRVILEQAQEKPGVAKALKIFGIQWR</sequence>
<comment type="function">
    <text evidence="1">Essential component of the TIM23 complex, a complex that mediates the translocation of transit peptide-containing proteins across the mitochondrial inner membrane. Required to keep the TOM and the TIM23 complexes in close contact. At some point, it is released from the TOM23 complex to allow protein translocation into the mitochondrial matrix (By similarity).</text>
</comment>
<comment type="subunit">
    <text evidence="1">Component of the TIM23 complex, at least composed of TIM23/timX, TIM17/timQ, tim50 and TIM21/timU.</text>
</comment>
<comment type="subcellular location">
    <subcellularLocation>
        <location evidence="1">Mitochondrion inner membrane</location>
        <topology evidence="1">Single-pass membrane protein</topology>
    </subcellularLocation>
</comment>
<comment type="similarity">
    <text evidence="3">Belongs to the TIM21 family.</text>
</comment>
<proteinExistence type="inferred from homology"/>
<keyword id="KW-0472">Membrane</keyword>
<keyword id="KW-0496">Mitochondrion</keyword>
<keyword id="KW-0999">Mitochondrion inner membrane</keyword>
<keyword id="KW-0653">Protein transport</keyword>
<keyword id="KW-1185">Reference proteome</keyword>
<keyword id="KW-0809">Transit peptide</keyword>
<keyword id="KW-0811">Translocation</keyword>
<keyword id="KW-0812">Transmembrane</keyword>
<keyword id="KW-1133">Transmembrane helix</keyword>
<keyword id="KW-0813">Transport</keyword>
<dbReference type="EMBL" id="AAHF01000001">
    <property type="protein sequence ID" value="EAL93277.1"/>
    <property type="molecule type" value="Genomic_DNA"/>
</dbReference>
<dbReference type="RefSeq" id="XP_755315.1">
    <property type="nucleotide sequence ID" value="XM_750222.1"/>
</dbReference>
<dbReference type="SMR" id="Q4X1I8"/>
<dbReference type="FunCoup" id="Q4X1I8">
    <property type="interactions" value="236"/>
</dbReference>
<dbReference type="STRING" id="330879.Q4X1I8"/>
<dbReference type="EnsemblFungi" id="EAL93277">
    <property type="protein sequence ID" value="EAL93277"/>
    <property type="gene ID" value="AFUA_2G09820"/>
</dbReference>
<dbReference type="GeneID" id="3513372"/>
<dbReference type="KEGG" id="afm:AFUA_2G09820"/>
<dbReference type="VEuPathDB" id="FungiDB:Afu2g09820"/>
<dbReference type="eggNOG" id="KOG4836">
    <property type="taxonomic scope" value="Eukaryota"/>
</dbReference>
<dbReference type="HOGENOM" id="CLU_089407_0_0_1"/>
<dbReference type="InParanoid" id="Q4X1I8"/>
<dbReference type="OMA" id="HFHVEGP"/>
<dbReference type="OrthoDB" id="436405at2759"/>
<dbReference type="Proteomes" id="UP000002530">
    <property type="component" value="Chromosome 2"/>
</dbReference>
<dbReference type="GO" id="GO:0005744">
    <property type="term" value="C:TIM23 mitochondrial import inner membrane translocase complex"/>
    <property type="evidence" value="ECO:0000318"/>
    <property type="project" value="GO_Central"/>
</dbReference>
<dbReference type="GO" id="GO:0030150">
    <property type="term" value="P:protein import into mitochondrial matrix"/>
    <property type="evidence" value="ECO:0000318"/>
    <property type="project" value="GO_Central"/>
</dbReference>
<dbReference type="FunFam" id="3.10.450.320:FF:000002">
    <property type="entry name" value="Mitochondrial import inner membrane translocase subunit tim21"/>
    <property type="match status" value="1"/>
</dbReference>
<dbReference type="Gene3D" id="3.10.450.320">
    <property type="entry name" value="Mitochondrial import inner membrane translocase subunit Tim21"/>
    <property type="match status" value="1"/>
</dbReference>
<dbReference type="InterPro" id="IPR013261">
    <property type="entry name" value="Tim21"/>
</dbReference>
<dbReference type="InterPro" id="IPR038552">
    <property type="entry name" value="Tim21_IMS_sf"/>
</dbReference>
<dbReference type="PANTHER" id="PTHR13032">
    <property type="entry name" value="MITOCHONDRIAL IMPORT INNER MEMBRANE TRANSLOCASE SUBUNIT TIM21"/>
    <property type="match status" value="1"/>
</dbReference>
<dbReference type="PANTHER" id="PTHR13032:SF6">
    <property type="entry name" value="MITOCHONDRIAL IMPORT INNER MEMBRANE TRANSLOCASE SUBUNIT TIM21"/>
    <property type="match status" value="1"/>
</dbReference>
<dbReference type="Pfam" id="PF08294">
    <property type="entry name" value="TIM21"/>
    <property type="match status" value="1"/>
</dbReference>
<name>TIM21_ASPFU</name>
<gene>
    <name type="primary">tim21</name>
    <name type="ORF">AFUA_2G09820</name>
</gene>
<accession>Q4X1I8</accession>
<reference key="1">
    <citation type="journal article" date="2005" name="Nature">
        <title>Genomic sequence of the pathogenic and allergenic filamentous fungus Aspergillus fumigatus.</title>
        <authorList>
            <person name="Nierman W.C."/>
            <person name="Pain A."/>
            <person name="Anderson M.J."/>
            <person name="Wortman J.R."/>
            <person name="Kim H.S."/>
            <person name="Arroyo J."/>
            <person name="Berriman M."/>
            <person name="Abe K."/>
            <person name="Archer D.B."/>
            <person name="Bermejo C."/>
            <person name="Bennett J.W."/>
            <person name="Bowyer P."/>
            <person name="Chen D."/>
            <person name="Collins M."/>
            <person name="Coulsen R."/>
            <person name="Davies R."/>
            <person name="Dyer P.S."/>
            <person name="Farman M.L."/>
            <person name="Fedorova N."/>
            <person name="Fedorova N.D."/>
            <person name="Feldblyum T.V."/>
            <person name="Fischer R."/>
            <person name="Fosker N."/>
            <person name="Fraser A."/>
            <person name="Garcia J.L."/>
            <person name="Garcia M.J."/>
            <person name="Goble A."/>
            <person name="Goldman G.H."/>
            <person name="Gomi K."/>
            <person name="Griffith-Jones S."/>
            <person name="Gwilliam R."/>
            <person name="Haas B.J."/>
            <person name="Haas H."/>
            <person name="Harris D.E."/>
            <person name="Horiuchi H."/>
            <person name="Huang J."/>
            <person name="Humphray S."/>
            <person name="Jimenez J."/>
            <person name="Keller N."/>
            <person name="Khouri H."/>
            <person name="Kitamoto K."/>
            <person name="Kobayashi T."/>
            <person name="Konzack S."/>
            <person name="Kulkarni R."/>
            <person name="Kumagai T."/>
            <person name="Lafton A."/>
            <person name="Latge J.-P."/>
            <person name="Li W."/>
            <person name="Lord A."/>
            <person name="Lu C."/>
            <person name="Majoros W.H."/>
            <person name="May G.S."/>
            <person name="Miller B.L."/>
            <person name="Mohamoud Y."/>
            <person name="Molina M."/>
            <person name="Monod M."/>
            <person name="Mouyna I."/>
            <person name="Mulligan S."/>
            <person name="Murphy L.D."/>
            <person name="O'Neil S."/>
            <person name="Paulsen I."/>
            <person name="Penalva M.A."/>
            <person name="Pertea M."/>
            <person name="Price C."/>
            <person name="Pritchard B.L."/>
            <person name="Quail M.A."/>
            <person name="Rabbinowitsch E."/>
            <person name="Rawlins N."/>
            <person name="Rajandream M.A."/>
            <person name="Reichard U."/>
            <person name="Renauld H."/>
            <person name="Robson G.D."/>
            <person name="Rodriguez de Cordoba S."/>
            <person name="Rodriguez-Pena J.M."/>
            <person name="Ronning C.M."/>
            <person name="Rutter S."/>
            <person name="Salzberg S.L."/>
            <person name="Sanchez M."/>
            <person name="Sanchez-Ferrero J.C."/>
            <person name="Saunders D."/>
            <person name="Seeger K."/>
            <person name="Squares R."/>
            <person name="Squares S."/>
            <person name="Takeuchi M."/>
            <person name="Tekaia F."/>
            <person name="Turner G."/>
            <person name="Vazquez de Aldana C.R."/>
            <person name="Weidman J."/>
            <person name="White O."/>
            <person name="Woodward J.R."/>
            <person name="Yu J.-H."/>
            <person name="Fraser C.M."/>
            <person name="Galagan J.E."/>
            <person name="Asai K."/>
            <person name="Machida M."/>
            <person name="Hall N."/>
            <person name="Barrell B.G."/>
            <person name="Denning D.W."/>
        </authorList>
    </citation>
    <scope>NUCLEOTIDE SEQUENCE [LARGE SCALE GENOMIC DNA]</scope>
    <source>
        <strain>ATCC MYA-4609 / CBS 101355 / FGSC A1100 / Af293</strain>
    </source>
</reference>
<evidence type="ECO:0000250" key="1"/>
<evidence type="ECO:0000255" key="2"/>
<evidence type="ECO:0000305" key="3"/>